<keyword id="KW-0028">Amino-acid biosynthesis</keyword>
<keyword id="KW-0963">Cytoplasm</keyword>
<keyword id="KW-0368">Histidine biosynthesis</keyword>
<keyword id="KW-0456">Lyase</keyword>
<keyword id="KW-1185">Reference proteome</keyword>
<sequence>MTQRIASHSRKTAETDISATVNLDGSGTSAIETGVVFLDHMLTNFSRHSGIDVQLRCSGDLEVDDHHTVEDVALVLGKAIVDALGDKKGIGRYGWAIIPMDEALAQCSIDLGGRSYCVFRAEFQRPVIQGLSTEMVEHFFVSLSRTMNANLHLAVLEGRNTHHMIEALFKSLAYAMKQAVKVESTEIKSTKGAI</sequence>
<reference key="1">
    <citation type="journal article" date="2002" name="Proc. Natl. Acad. Sci. U.S.A.">
        <title>The complete genome sequence of Chlorobium tepidum TLS, a photosynthetic, anaerobic, green-sulfur bacterium.</title>
        <authorList>
            <person name="Eisen J.A."/>
            <person name="Nelson K.E."/>
            <person name="Paulsen I.T."/>
            <person name="Heidelberg J.F."/>
            <person name="Wu M."/>
            <person name="Dodson R.J."/>
            <person name="DeBoy R.T."/>
            <person name="Gwinn M.L."/>
            <person name="Nelson W.C."/>
            <person name="Haft D.H."/>
            <person name="Hickey E.K."/>
            <person name="Peterson J.D."/>
            <person name="Durkin A.S."/>
            <person name="Kolonay J.F."/>
            <person name="Yang F."/>
            <person name="Holt I.E."/>
            <person name="Umayam L.A."/>
            <person name="Mason T.M."/>
            <person name="Brenner M."/>
            <person name="Shea T.P."/>
            <person name="Parksey D.S."/>
            <person name="Nierman W.C."/>
            <person name="Feldblyum T.V."/>
            <person name="Hansen C.L."/>
            <person name="Craven M.B."/>
            <person name="Radune D."/>
            <person name="Vamathevan J.J."/>
            <person name="Khouri H.M."/>
            <person name="White O."/>
            <person name="Gruber T.M."/>
            <person name="Ketchum K.A."/>
            <person name="Venter J.C."/>
            <person name="Tettelin H."/>
            <person name="Bryant D.A."/>
            <person name="Fraser C.M."/>
        </authorList>
    </citation>
    <scope>NUCLEOTIDE SEQUENCE [LARGE SCALE GENOMIC DNA]</scope>
    <source>
        <strain>ATCC 49652 / DSM 12025 / NBRC 103806 / TLS</strain>
    </source>
</reference>
<accession>Q8KEF4</accession>
<gene>
    <name evidence="1" type="primary">hisB</name>
    <name type="ordered locus">CT0735</name>
</gene>
<proteinExistence type="inferred from homology"/>
<evidence type="ECO:0000255" key="1">
    <source>
        <dbReference type="HAMAP-Rule" id="MF_00076"/>
    </source>
</evidence>
<organism>
    <name type="scientific">Chlorobaculum tepidum (strain ATCC 49652 / DSM 12025 / NBRC 103806 / TLS)</name>
    <name type="common">Chlorobium tepidum</name>
    <dbReference type="NCBI Taxonomy" id="194439"/>
    <lineage>
        <taxon>Bacteria</taxon>
        <taxon>Pseudomonadati</taxon>
        <taxon>Chlorobiota</taxon>
        <taxon>Chlorobiia</taxon>
        <taxon>Chlorobiales</taxon>
        <taxon>Chlorobiaceae</taxon>
        <taxon>Chlorobaculum</taxon>
    </lineage>
</organism>
<feature type="chain" id="PRO_0000158122" description="Imidazoleglycerol-phosphate dehydratase">
    <location>
        <begin position="1"/>
        <end position="194"/>
    </location>
</feature>
<protein>
    <recommendedName>
        <fullName evidence="1">Imidazoleglycerol-phosphate dehydratase</fullName>
        <shortName evidence="1">IGPD</shortName>
        <ecNumber evidence="1">4.2.1.19</ecNumber>
    </recommendedName>
</protein>
<name>HIS7_CHLTE</name>
<comment type="catalytic activity">
    <reaction evidence="1">
        <text>D-erythro-1-(imidazol-4-yl)glycerol 3-phosphate = 3-(imidazol-4-yl)-2-oxopropyl phosphate + H2O</text>
        <dbReference type="Rhea" id="RHEA:11040"/>
        <dbReference type="ChEBI" id="CHEBI:15377"/>
        <dbReference type="ChEBI" id="CHEBI:57766"/>
        <dbReference type="ChEBI" id="CHEBI:58278"/>
        <dbReference type="EC" id="4.2.1.19"/>
    </reaction>
</comment>
<comment type="pathway">
    <text evidence="1">Amino-acid biosynthesis; L-histidine biosynthesis; L-histidine from 5-phospho-alpha-D-ribose 1-diphosphate: step 6/9.</text>
</comment>
<comment type="subcellular location">
    <subcellularLocation>
        <location evidence="1">Cytoplasm</location>
    </subcellularLocation>
</comment>
<comment type="similarity">
    <text evidence="1">Belongs to the imidazoleglycerol-phosphate dehydratase family.</text>
</comment>
<dbReference type="EC" id="4.2.1.19" evidence="1"/>
<dbReference type="EMBL" id="AE006470">
    <property type="protein sequence ID" value="AAM71972.1"/>
    <property type="molecule type" value="Genomic_DNA"/>
</dbReference>
<dbReference type="RefSeq" id="NP_661630.1">
    <property type="nucleotide sequence ID" value="NC_002932.3"/>
</dbReference>
<dbReference type="RefSeq" id="WP_010932417.1">
    <property type="nucleotide sequence ID" value="NC_002932.3"/>
</dbReference>
<dbReference type="SMR" id="Q8KEF4"/>
<dbReference type="STRING" id="194439.CT0735"/>
<dbReference type="EnsemblBacteria" id="AAM71972">
    <property type="protein sequence ID" value="AAM71972"/>
    <property type="gene ID" value="CT0735"/>
</dbReference>
<dbReference type="KEGG" id="cte:CT0735"/>
<dbReference type="PATRIC" id="fig|194439.7.peg.672"/>
<dbReference type="eggNOG" id="COG0131">
    <property type="taxonomic scope" value="Bacteria"/>
</dbReference>
<dbReference type="HOGENOM" id="CLU_044308_3_0_10"/>
<dbReference type="OrthoDB" id="9790411at2"/>
<dbReference type="UniPathway" id="UPA00031">
    <property type="reaction ID" value="UER00011"/>
</dbReference>
<dbReference type="Proteomes" id="UP000001007">
    <property type="component" value="Chromosome"/>
</dbReference>
<dbReference type="GO" id="GO:0005737">
    <property type="term" value="C:cytoplasm"/>
    <property type="evidence" value="ECO:0007669"/>
    <property type="project" value="UniProtKB-SubCell"/>
</dbReference>
<dbReference type="GO" id="GO:0004424">
    <property type="term" value="F:imidazoleglycerol-phosphate dehydratase activity"/>
    <property type="evidence" value="ECO:0007669"/>
    <property type="project" value="UniProtKB-UniRule"/>
</dbReference>
<dbReference type="GO" id="GO:0000105">
    <property type="term" value="P:L-histidine biosynthetic process"/>
    <property type="evidence" value="ECO:0007669"/>
    <property type="project" value="UniProtKB-UniRule"/>
</dbReference>
<dbReference type="CDD" id="cd07914">
    <property type="entry name" value="IGPD"/>
    <property type="match status" value="1"/>
</dbReference>
<dbReference type="FunFam" id="3.30.230.40:FF:000001">
    <property type="entry name" value="Imidazoleglycerol-phosphate dehydratase HisB"/>
    <property type="match status" value="1"/>
</dbReference>
<dbReference type="FunFam" id="3.30.230.40:FF:000003">
    <property type="entry name" value="Imidazoleglycerol-phosphate dehydratase HisB"/>
    <property type="match status" value="1"/>
</dbReference>
<dbReference type="Gene3D" id="3.30.230.40">
    <property type="entry name" value="Imidazole glycerol phosphate dehydratase, domain 1"/>
    <property type="match status" value="2"/>
</dbReference>
<dbReference type="HAMAP" id="MF_00076">
    <property type="entry name" value="HisB"/>
    <property type="match status" value="1"/>
</dbReference>
<dbReference type="InterPro" id="IPR038494">
    <property type="entry name" value="IGPD_sf"/>
</dbReference>
<dbReference type="InterPro" id="IPR000807">
    <property type="entry name" value="ImidazoleglycerolP_deHydtase"/>
</dbReference>
<dbReference type="InterPro" id="IPR020565">
    <property type="entry name" value="ImidazoleglycerP_deHydtase_CS"/>
</dbReference>
<dbReference type="InterPro" id="IPR020568">
    <property type="entry name" value="Ribosomal_Su5_D2-typ_SF"/>
</dbReference>
<dbReference type="NCBIfam" id="NF002111">
    <property type="entry name" value="PRK00951.2-1"/>
    <property type="match status" value="1"/>
</dbReference>
<dbReference type="NCBIfam" id="NF002114">
    <property type="entry name" value="PRK00951.2-4"/>
    <property type="match status" value="1"/>
</dbReference>
<dbReference type="PANTHER" id="PTHR23133:SF2">
    <property type="entry name" value="IMIDAZOLEGLYCEROL-PHOSPHATE DEHYDRATASE"/>
    <property type="match status" value="1"/>
</dbReference>
<dbReference type="PANTHER" id="PTHR23133">
    <property type="entry name" value="IMIDAZOLEGLYCEROL-PHOSPHATE DEHYDRATASE HIS7"/>
    <property type="match status" value="1"/>
</dbReference>
<dbReference type="Pfam" id="PF00475">
    <property type="entry name" value="IGPD"/>
    <property type="match status" value="1"/>
</dbReference>
<dbReference type="SUPFAM" id="SSF54211">
    <property type="entry name" value="Ribosomal protein S5 domain 2-like"/>
    <property type="match status" value="2"/>
</dbReference>
<dbReference type="PROSITE" id="PS00954">
    <property type="entry name" value="IGP_DEHYDRATASE_1"/>
    <property type="match status" value="1"/>
</dbReference>
<dbReference type="PROSITE" id="PS00955">
    <property type="entry name" value="IGP_DEHYDRATASE_2"/>
    <property type="match status" value="1"/>
</dbReference>